<keyword id="KW-1185">Reference proteome</keyword>
<keyword id="KW-0687">Ribonucleoprotein</keyword>
<keyword id="KW-0689">Ribosomal protein</keyword>
<keyword id="KW-0694">RNA-binding</keyword>
<keyword id="KW-0699">rRNA-binding</keyword>
<protein>
    <recommendedName>
        <fullName evidence="1">Small ribosomal subunit protein uS3</fullName>
    </recommendedName>
    <alternativeName>
        <fullName evidence="3">30S ribosomal protein S3</fullName>
    </alternativeName>
</protein>
<accession>Q7NQF8</accession>
<gene>
    <name evidence="1" type="primary">rpsC</name>
    <name type="ordered locus">CV_4180</name>
</gene>
<comment type="function">
    <text evidence="1">Binds the lower part of the 30S subunit head. Binds mRNA in the 70S ribosome, positioning it for translation.</text>
</comment>
<comment type="subunit">
    <text evidence="1">Part of the 30S ribosomal subunit. Forms a tight complex with proteins S10 and S14.</text>
</comment>
<comment type="similarity">
    <text evidence="1">Belongs to the universal ribosomal protein uS3 family.</text>
</comment>
<reference key="1">
    <citation type="journal article" date="2003" name="Proc. Natl. Acad. Sci. U.S.A.">
        <title>The complete genome sequence of Chromobacterium violaceum reveals remarkable and exploitable bacterial adaptability.</title>
        <authorList>
            <person name="Vasconcelos A.T.R."/>
            <person name="de Almeida D.F."/>
            <person name="Hungria M."/>
            <person name="Guimaraes C.T."/>
            <person name="Antonio R.V."/>
            <person name="Almeida F.C."/>
            <person name="de Almeida L.G.P."/>
            <person name="de Almeida R."/>
            <person name="Alves-Gomes J.A."/>
            <person name="Andrade E.M."/>
            <person name="Araripe J."/>
            <person name="de Araujo M.F.F."/>
            <person name="Astolfi-Filho S."/>
            <person name="Azevedo V."/>
            <person name="Baptista A.J."/>
            <person name="Bataus L.A.M."/>
            <person name="Batista J.S."/>
            <person name="Belo A."/>
            <person name="van den Berg C."/>
            <person name="Bogo M."/>
            <person name="Bonatto S."/>
            <person name="Bordignon J."/>
            <person name="Brigido M.M."/>
            <person name="Brito C.A."/>
            <person name="Brocchi M."/>
            <person name="Burity H.A."/>
            <person name="Camargo A.A."/>
            <person name="Cardoso D.D.P."/>
            <person name="Carneiro N.P."/>
            <person name="Carraro D.M."/>
            <person name="Carvalho C.M.B."/>
            <person name="Cascardo J.C.M."/>
            <person name="Cavada B.S."/>
            <person name="Chueire L.M.O."/>
            <person name="Creczynski-Pasa T.B."/>
            <person name="Cunha-Junior N.C."/>
            <person name="Fagundes N."/>
            <person name="Falcao C.L."/>
            <person name="Fantinatti F."/>
            <person name="Farias I.P."/>
            <person name="Felipe M.S.S."/>
            <person name="Ferrari L.P."/>
            <person name="Ferro J.A."/>
            <person name="Ferro M.I.T."/>
            <person name="Franco G.R."/>
            <person name="Freitas N.S.A."/>
            <person name="Furlan L.R."/>
            <person name="Gazzinelli R.T."/>
            <person name="Gomes E.A."/>
            <person name="Goncalves P.R."/>
            <person name="Grangeiro T.B."/>
            <person name="Grattapaglia D."/>
            <person name="Grisard E.C."/>
            <person name="Hanna E.S."/>
            <person name="Jardim S.N."/>
            <person name="Laurino J."/>
            <person name="Leoi L.C.T."/>
            <person name="Lima L.F.A."/>
            <person name="Loureiro M.F."/>
            <person name="Lyra M.C.C.P."/>
            <person name="Madeira H.M.F."/>
            <person name="Manfio G.P."/>
            <person name="Maranhao A.Q."/>
            <person name="Martins W.S."/>
            <person name="di Mauro S.M.Z."/>
            <person name="de Medeiros S.R.B."/>
            <person name="Meissner R.V."/>
            <person name="Moreira M.A.M."/>
            <person name="Nascimento F.F."/>
            <person name="Nicolas M.F."/>
            <person name="Oliveira J.G."/>
            <person name="Oliveira S.C."/>
            <person name="Paixao R.F.C."/>
            <person name="Parente J.A."/>
            <person name="Pedrosa F.O."/>
            <person name="Pena S.D.J."/>
            <person name="Pereira J.O."/>
            <person name="Pereira M."/>
            <person name="Pinto L.S.R.C."/>
            <person name="Pinto L.S."/>
            <person name="Porto J.I.R."/>
            <person name="Potrich D.P."/>
            <person name="Ramalho-Neto C.E."/>
            <person name="Reis A.M.M."/>
            <person name="Rigo L.U."/>
            <person name="Rondinelli E."/>
            <person name="Santos E.B.P."/>
            <person name="Santos F.R."/>
            <person name="Schneider M.P.C."/>
            <person name="Seuanez H.N."/>
            <person name="Silva A.M.R."/>
            <person name="da Silva A.L.C."/>
            <person name="Silva D.W."/>
            <person name="Silva R."/>
            <person name="Simoes I.C."/>
            <person name="Simon D."/>
            <person name="Soares C.M.A."/>
            <person name="Soares R.B.A."/>
            <person name="Souza E.M."/>
            <person name="Souza K.R.L."/>
            <person name="Souza R.C."/>
            <person name="Steffens M.B.R."/>
            <person name="Steindel M."/>
            <person name="Teixeira S.R."/>
            <person name="Urmenyi T."/>
            <person name="Vettore A."/>
            <person name="Wassem R."/>
            <person name="Zaha A."/>
            <person name="Simpson A.J.G."/>
        </authorList>
    </citation>
    <scope>NUCLEOTIDE SEQUENCE [LARGE SCALE GENOMIC DNA]</scope>
    <source>
        <strain>ATCC 12472 / DSM 30191 / JCM 1249 / CCUG 213 / NBRC 12614 / NCIMB 9131 / NCTC 9757 / MK</strain>
    </source>
</reference>
<organism>
    <name type="scientific">Chromobacterium violaceum (strain ATCC 12472 / DSM 30191 / JCM 1249 / CCUG 213 / NBRC 12614 / NCIMB 9131 / NCTC 9757 / MK)</name>
    <dbReference type="NCBI Taxonomy" id="243365"/>
    <lineage>
        <taxon>Bacteria</taxon>
        <taxon>Pseudomonadati</taxon>
        <taxon>Pseudomonadota</taxon>
        <taxon>Betaproteobacteria</taxon>
        <taxon>Neisseriales</taxon>
        <taxon>Chromobacteriaceae</taxon>
        <taxon>Chromobacterium</taxon>
    </lineage>
</organism>
<feature type="chain" id="PRO_0000130102" description="Small ribosomal subunit protein uS3">
    <location>
        <begin position="1"/>
        <end position="233"/>
    </location>
</feature>
<feature type="domain" description="KH type-2" evidence="1">
    <location>
        <begin position="39"/>
        <end position="107"/>
    </location>
</feature>
<feature type="region of interest" description="Disordered" evidence="2">
    <location>
        <begin position="212"/>
        <end position="233"/>
    </location>
</feature>
<sequence length="233" mass="26102">MGQKIHPTGFRLAVNKNWSSKWFASSQNFPEMLKQDIEVREFLKKRLGHASVGRVTIERPAKSARITIHSARPGVVIGKKGEDIEVLKQELQKRLGVPVHVNIEEVRKPELDAQIIADGIASQLEKRVMFRRAMKRAMQNAMRLGAEGIKIMSSGRLNGIDIARSEWYREGRVPLHTLRADVDYATSEAKTTYGIIGIKVWVYKGELKPGQVQATPAAPEKKMRKGARNAAAN</sequence>
<dbReference type="EMBL" id="AE016825">
    <property type="protein sequence ID" value="AAQ61840.1"/>
    <property type="molecule type" value="Genomic_DNA"/>
</dbReference>
<dbReference type="RefSeq" id="WP_011137727.1">
    <property type="nucleotide sequence ID" value="NC_005085.1"/>
</dbReference>
<dbReference type="SMR" id="Q7NQF8"/>
<dbReference type="STRING" id="243365.CV_4180"/>
<dbReference type="GeneID" id="66366348"/>
<dbReference type="KEGG" id="cvi:CV_4180"/>
<dbReference type="eggNOG" id="COG0092">
    <property type="taxonomic scope" value="Bacteria"/>
</dbReference>
<dbReference type="HOGENOM" id="CLU_058591_0_2_4"/>
<dbReference type="OrthoDB" id="9806396at2"/>
<dbReference type="Proteomes" id="UP000001424">
    <property type="component" value="Chromosome"/>
</dbReference>
<dbReference type="GO" id="GO:0022627">
    <property type="term" value="C:cytosolic small ribosomal subunit"/>
    <property type="evidence" value="ECO:0007669"/>
    <property type="project" value="TreeGrafter"/>
</dbReference>
<dbReference type="GO" id="GO:0003729">
    <property type="term" value="F:mRNA binding"/>
    <property type="evidence" value="ECO:0007669"/>
    <property type="project" value="UniProtKB-UniRule"/>
</dbReference>
<dbReference type="GO" id="GO:0019843">
    <property type="term" value="F:rRNA binding"/>
    <property type="evidence" value="ECO:0007669"/>
    <property type="project" value="UniProtKB-UniRule"/>
</dbReference>
<dbReference type="GO" id="GO:0003735">
    <property type="term" value="F:structural constituent of ribosome"/>
    <property type="evidence" value="ECO:0007669"/>
    <property type="project" value="InterPro"/>
</dbReference>
<dbReference type="GO" id="GO:0006412">
    <property type="term" value="P:translation"/>
    <property type="evidence" value="ECO:0007669"/>
    <property type="project" value="UniProtKB-UniRule"/>
</dbReference>
<dbReference type="CDD" id="cd02412">
    <property type="entry name" value="KH-II_30S_S3"/>
    <property type="match status" value="1"/>
</dbReference>
<dbReference type="FunFam" id="3.30.1140.32:FF:000006">
    <property type="entry name" value="30S ribosomal protein S3"/>
    <property type="match status" value="1"/>
</dbReference>
<dbReference type="FunFam" id="3.30.300.20:FF:000001">
    <property type="entry name" value="30S ribosomal protein S3"/>
    <property type="match status" value="1"/>
</dbReference>
<dbReference type="Gene3D" id="3.30.300.20">
    <property type="match status" value="1"/>
</dbReference>
<dbReference type="Gene3D" id="3.30.1140.32">
    <property type="entry name" value="Ribosomal protein S3, C-terminal domain"/>
    <property type="match status" value="1"/>
</dbReference>
<dbReference type="HAMAP" id="MF_01309_B">
    <property type="entry name" value="Ribosomal_uS3_B"/>
    <property type="match status" value="1"/>
</dbReference>
<dbReference type="InterPro" id="IPR004087">
    <property type="entry name" value="KH_dom"/>
</dbReference>
<dbReference type="InterPro" id="IPR015946">
    <property type="entry name" value="KH_dom-like_a/b"/>
</dbReference>
<dbReference type="InterPro" id="IPR004044">
    <property type="entry name" value="KH_dom_type_2"/>
</dbReference>
<dbReference type="InterPro" id="IPR009019">
    <property type="entry name" value="KH_sf_prok-type"/>
</dbReference>
<dbReference type="InterPro" id="IPR036419">
    <property type="entry name" value="Ribosomal_S3_C_sf"/>
</dbReference>
<dbReference type="InterPro" id="IPR005704">
    <property type="entry name" value="Ribosomal_uS3_bac-typ"/>
</dbReference>
<dbReference type="InterPro" id="IPR001351">
    <property type="entry name" value="Ribosomal_uS3_C"/>
</dbReference>
<dbReference type="InterPro" id="IPR018280">
    <property type="entry name" value="Ribosomal_uS3_CS"/>
</dbReference>
<dbReference type="NCBIfam" id="TIGR01009">
    <property type="entry name" value="rpsC_bact"/>
    <property type="match status" value="1"/>
</dbReference>
<dbReference type="PANTHER" id="PTHR11760">
    <property type="entry name" value="30S/40S RIBOSOMAL PROTEIN S3"/>
    <property type="match status" value="1"/>
</dbReference>
<dbReference type="PANTHER" id="PTHR11760:SF19">
    <property type="entry name" value="SMALL RIBOSOMAL SUBUNIT PROTEIN US3C"/>
    <property type="match status" value="1"/>
</dbReference>
<dbReference type="Pfam" id="PF07650">
    <property type="entry name" value="KH_2"/>
    <property type="match status" value="1"/>
</dbReference>
<dbReference type="Pfam" id="PF00189">
    <property type="entry name" value="Ribosomal_S3_C"/>
    <property type="match status" value="1"/>
</dbReference>
<dbReference type="SMART" id="SM00322">
    <property type="entry name" value="KH"/>
    <property type="match status" value="1"/>
</dbReference>
<dbReference type="SUPFAM" id="SSF54814">
    <property type="entry name" value="Prokaryotic type KH domain (KH-domain type II)"/>
    <property type="match status" value="1"/>
</dbReference>
<dbReference type="SUPFAM" id="SSF54821">
    <property type="entry name" value="Ribosomal protein S3 C-terminal domain"/>
    <property type="match status" value="1"/>
</dbReference>
<dbReference type="PROSITE" id="PS50823">
    <property type="entry name" value="KH_TYPE_2"/>
    <property type="match status" value="1"/>
</dbReference>
<dbReference type="PROSITE" id="PS00548">
    <property type="entry name" value="RIBOSOMAL_S3"/>
    <property type="match status" value="1"/>
</dbReference>
<proteinExistence type="inferred from homology"/>
<evidence type="ECO:0000255" key="1">
    <source>
        <dbReference type="HAMAP-Rule" id="MF_01309"/>
    </source>
</evidence>
<evidence type="ECO:0000256" key="2">
    <source>
        <dbReference type="SAM" id="MobiDB-lite"/>
    </source>
</evidence>
<evidence type="ECO:0000305" key="3"/>
<name>RS3_CHRVO</name>